<comment type="function">
    <text evidence="1">Acts as a mediator between the cap-binding complex (CBC) and the primary microRNAs (miRNAs) processing machinery during cell proliferation. Contributes to the stability and delivery of capped primary miRNA transcripts to the primary miRNA processing complex, thereby playing a role in RNA-mediated gene silencing (RNAi) by miRNAs (By similarity).</text>
</comment>
<comment type="subunit">
    <text evidence="1">Interacts ncbp1/cbp80.</text>
</comment>
<comment type="subcellular location">
    <subcellularLocation>
        <location evidence="1">Nucleus</location>
        <location evidence="1">Nucleoplasm</location>
    </subcellularLocation>
    <subcellularLocation>
        <location evidence="1">Cytoplasm</location>
    </subcellularLocation>
    <text evidence="1">Predominantly nuclear. Shuttles between the nucleus and the cytoplasm (By similarity).</text>
</comment>
<comment type="similarity">
    <text evidence="3">Belongs to the ARS2 family.</text>
</comment>
<comment type="sequence caution" evidence="3">
    <conflict type="miscellaneous discrepancy">
        <sequence resource="EMBL-CDS" id="AAI28977"/>
    </conflict>
    <text>Contaminating sequence. Potential poly-A sequence.</text>
</comment>
<organism>
    <name type="scientific">Xenopus laevis</name>
    <name type="common">African clawed frog</name>
    <dbReference type="NCBI Taxonomy" id="8355"/>
    <lineage>
        <taxon>Eukaryota</taxon>
        <taxon>Metazoa</taxon>
        <taxon>Chordata</taxon>
        <taxon>Craniata</taxon>
        <taxon>Vertebrata</taxon>
        <taxon>Euteleostomi</taxon>
        <taxon>Amphibia</taxon>
        <taxon>Batrachia</taxon>
        <taxon>Anura</taxon>
        <taxon>Pipoidea</taxon>
        <taxon>Pipidae</taxon>
        <taxon>Xenopodinae</taxon>
        <taxon>Xenopus</taxon>
        <taxon>Xenopus</taxon>
    </lineage>
</organism>
<gene>
    <name type="primary">srrt-a</name>
    <name type="synonym">ars2-a</name>
</gene>
<sequence length="849" mass="98581">MADSDDEYDRRRRDKFRRERSDYDRSREREERRRDDWSDREWDRGRERRSRGEYRDYESRSRRERFSPQRHDLSPPQKRMRRDWDDHGSDPYHSGYDLPYSSSAGGPGYGPPQPWGHPEMHVLQHHGIPIQARLGNLHQVDLGTPAPIMKTFKEFLLSLEDTVDETEAVKRYNDYKIDFRRQQMQEFFLAHKDEEWFRSKYHPDEVGKHKQESQASLRNRLSAFMFLMEKSWLNEVQLDIAQSPAIIKVLDAAVIKMEGGTEIDLKILDEEEEEAKREAAKKEEAPVTETEKVVTEEKEAPAKPENDKEDESEEKPVKPQEEEEKKVEKKVEKEEPERETRKPGTRKRKRSGESDDGSDSESDTETASPKPKAETPNQNGRAEETPKKEEDTEKQKEKQKEDTVKPRPLHKTCSIFMRNIPPNISKAEITALCKRYPGFMRVALSEPQPERRFLRKAYVTFDRSVNIKEICWSVQNIRLRECELSPGVNRDLTYRVRNINGITLHRPIVRNDIKLAARLIHALDERAVLWEGEQMVLAQNPILKNITDYLIDEVNAEEEELLFSAGRTPETELPKDGNPTEISVERDDKLIKVLDKLLFYLRIVHSVDYYNTCEYPNEDEMPTRCGMMHVRGPLPPNRVSHGEVAEWQKTFEEKLAPLFAVRETLSEEESIKMGKKDPEQEVEKFVAANTQELGKEKWLCPLSGKKFKGPEFVRKHIFNKHAEKIEEVKKEVVFFNNYLIDSKRPALLEVKPLQPPVGAAGQALAAGLLYPHQGPPALLPYAQPRPPVLGYGGAPQFPPNPYGAGRGNYDAFRGQGMYPGKPRNRMMRGDPRSIIEYRDLDAPDDVDFF</sequence>
<feature type="chain" id="PRO_0000385212" description="Serrate RNA effector molecule homolog A">
    <location>
        <begin position="1"/>
        <end position="849"/>
    </location>
</feature>
<feature type="region of interest" description="Disordered" evidence="2">
    <location>
        <begin position="1"/>
        <end position="90"/>
    </location>
</feature>
<feature type="region of interest" description="Disordered" evidence="2">
    <location>
        <begin position="276"/>
        <end position="409"/>
    </location>
</feature>
<feature type="compositionally biased region" description="Basic and acidic residues" evidence="2">
    <location>
        <begin position="8"/>
        <end position="73"/>
    </location>
</feature>
<feature type="compositionally biased region" description="Basic and acidic residues" evidence="2">
    <location>
        <begin position="276"/>
        <end position="306"/>
    </location>
</feature>
<feature type="compositionally biased region" description="Basic and acidic residues" evidence="2">
    <location>
        <begin position="314"/>
        <end position="342"/>
    </location>
</feature>
<feature type="compositionally biased region" description="Acidic residues" evidence="2">
    <location>
        <begin position="354"/>
        <end position="364"/>
    </location>
</feature>
<feature type="compositionally biased region" description="Basic and acidic residues" evidence="2">
    <location>
        <begin position="381"/>
        <end position="405"/>
    </location>
</feature>
<protein>
    <recommendedName>
        <fullName>Serrate RNA effector molecule homolog A</fullName>
    </recommendedName>
    <alternativeName>
        <fullName>Arsenite-resistance protein 2-A</fullName>
    </alternativeName>
</protein>
<evidence type="ECO:0000250" key="1"/>
<evidence type="ECO:0000256" key="2">
    <source>
        <dbReference type="SAM" id="MobiDB-lite"/>
    </source>
</evidence>
<evidence type="ECO:0000305" key="3"/>
<dbReference type="EMBL" id="BC128976">
    <property type="protein sequence ID" value="AAI28977.1"/>
    <property type="status" value="ALT_SEQ"/>
    <property type="molecule type" value="mRNA"/>
</dbReference>
<dbReference type="EMBL" id="BC160771">
    <property type="protein sequence ID" value="AAI60771.1"/>
    <property type="molecule type" value="mRNA"/>
</dbReference>
<dbReference type="RefSeq" id="NP_001116168.1">
    <property type="nucleotide sequence ID" value="NM_001122696.1"/>
</dbReference>
<dbReference type="SMR" id="B1H1X4"/>
<dbReference type="GeneID" id="100037061"/>
<dbReference type="KEGG" id="xla:100037061"/>
<dbReference type="AGR" id="Xenbase:XB-GENE-6255528"/>
<dbReference type="CTD" id="100037061"/>
<dbReference type="Xenbase" id="XB-GENE-6255528">
    <property type="gene designation" value="srrt.S"/>
</dbReference>
<dbReference type="OrthoDB" id="342064at2759"/>
<dbReference type="Proteomes" id="UP000186698">
    <property type="component" value="Chromosome 3S"/>
</dbReference>
<dbReference type="Bgee" id="100037061">
    <property type="expression patterns" value="Expressed in neurula embryo and 19 other cell types or tissues"/>
</dbReference>
<dbReference type="GO" id="GO:0005737">
    <property type="term" value="C:cytoplasm"/>
    <property type="evidence" value="ECO:0000250"/>
    <property type="project" value="UniProtKB"/>
</dbReference>
<dbReference type="GO" id="GO:0016604">
    <property type="term" value="C:nuclear body"/>
    <property type="evidence" value="ECO:0000318"/>
    <property type="project" value="GO_Central"/>
</dbReference>
<dbReference type="GO" id="GO:0005654">
    <property type="term" value="C:nucleoplasm"/>
    <property type="evidence" value="ECO:0000250"/>
    <property type="project" value="UniProtKB"/>
</dbReference>
<dbReference type="GO" id="GO:0003676">
    <property type="term" value="F:nucleic acid binding"/>
    <property type="evidence" value="ECO:0007669"/>
    <property type="project" value="InterPro"/>
</dbReference>
<dbReference type="GO" id="GO:0031053">
    <property type="term" value="P:primary miRNA processing"/>
    <property type="evidence" value="ECO:0000250"/>
    <property type="project" value="UniProtKB"/>
</dbReference>
<dbReference type="FunFam" id="3.30.70.330:FF:001309">
    <property type="entry name" value="Serrate RNA effector molecule homolog B"/>
    <property type="match status" value="1"/>
</dbReference>
<dbReference type="Gene3D" id="3.30.70.330">
    <property type="match status" value="1"/>
</dbReference>
<dbReference type="InterPro" id="IPR012677">
    <property type="entry name" value="Nucleotide-bd_a/b_plait_sf"/>
</dbReference>
<dbReference type="InterPro" id="IPR035979">
    <property type="entry name" value="RBD_domain_sf"/>
</dbReference>
<dbReference type="InterPro" id="IPR039727">
    <property type="entry name" value="SE/Ars2"/>
</dbReference>
<dbReference type="InterPro" id="IPR007042">
    <property type="entry name" value="SERRATE/Ars2_C"/>
</dbReference>
<dbReference type="InterPro" id="IPR021933">
    <property type="entry name" value="SERRATE/Ars2_N"/>
</dbReference>
<dbReference type="PANTHER" id="PTHR13165">
    <property type="entry name" value="ARSENITE-RESISTANCE PROTEIN 2"/>
    <property type="match status" value="1"/>
</dbReference>
<dbReference type="PANTHER" id="PTHR13165:SF0">
    <property type="entry name" value="SERRATE RNA EFFECTOR MOLECULE HOMOLOG"/>
    <property type="match status" value="1"/>
</dbReference>
<dbReference type="Pfam" id="PF04959">
    <property type="entry name" value="ARS2"/>
    <property type="match status" value="1"/>
</dbReference>
<dbReference type="Pfam" id="PF12066">
    <property type="entry name" value="SERRATE_Ars2_N"/>
    <property type="match status" value="1"/>
</dbReference>
<dbReference type="SUPFAM" id="SSF54928">
    <property type="entry name" value="RNA-binding domain, RBD"/>
    <property type="match status" value="1"/>
</dbReference>
<keyword id="KW-0963">Cytoplasm</keyword>
<keyword id="KW-0539">Nucleus</keyword>
<keyword id="KW-1185">Reference proteome</keyword>
<keyword id="KW-0943">RNA-mediated gene silencing</keyword>
<reference key="1">
    <citation type="submission" date="2008-03" db="EMBL/GenBank/DDBJ databases">
        <authorList>
            <consortium name="NIH - Xenopus Gene Collection (XGC) project"/>
        </authorList>
    </citation>
    <scope>NUCLEOTIDE SEQUENCE [LARGE SCALE MRNA]</scope>
    <source>
        <tissue>Kidney</tissue>
        <tissue>Oocyte</tissue>
    </source>
</reference>
<accession>B1H1X4</accession>
<accession>A1L1C0</accession>
<proteinExistence type="evidence at transcript level"/>
<name>SRRTA_XENLA</name>